<feature type="chain" id="PRO_0000187071" description="Clathrin coat assembly protein AP180">
    <location>
        <begin position="1"/>
        <end position="653"/>
    </location>
</feature>
<feature type="domain" description="ENTH" evidence="2">
    <location>
        <begin position="28"/>
        <end position="165"/>
    </location>
</feature>
<feature type="region of interest" description="Disordered" evidence="3">
    <location>
        <begin position="170"/>
        <end position="190"/>
    </location>
</feature>
<feature type="region of interest" description="Disordered" evidence="3">
    <location>
        <begin position="338"/>
        <end position="360"/>
    </location>
</feature>
<feature type="region of interest" description="Disordered" evidence="3">
    <location>
        <begin position="390"/>
        <end position="432"/>
    </location>
</feature>
<feature type="short sequence motif" description="Required to promote clathrin assembly">
    <location>
        <begin position="442"/>
        <end position="444"/>
    </location>
</feature>
<feature type="short sequence motif" description="ALPHAC-AD binding">
    <location>
        <begin position="608"/>
        <end position="610"/>
    </location>
</feature>
<feature type="compositionally biased region" description="Polar residues" evidence="3">
    <location>
        <begin position="174"/>
        <end position="185"/>
    </location>
</feature>
<feature type="compositionally biased region" description="Polar residues" evidence="3">
    <location>
        <begin position="416"/>
        <end position="432"/>
    </location>
</feature>
<feature type="mutagenesis site" description="Loss of clathrin assembly activity, but normal clathrin binding." evidence="4">
    <original>DLL</original>
    <variation>AAA</variation>
    <location>
        <begin position="442"/>
        <end position="444"/>
    </location>
</feature>
<feature type="mutagenesis site" description="Normal ALPHAC-AD binding." evidence="4">
    <original>DPW</original>
    <variation>AAA</variation>
    <location>
        <begin position="473"/>
        <end position="475"/>
    </location>
</feature>
<feature type="mutagenesis site" description="Loss of ALPHAC-AD binding." evidence="4">
    <original>DPF</original>
    <variation>AAA</variation>
    <location>
        <begin position="608"/>
        <end position="610"/>
    </location>
</feature>
<name>AP180_ARATH</name>
<keyword id="KW-0168">Coated pit</keyword>
<keyword id="KW-0968">Cytoplasmic vesicle</keyword>
<keyword id="KW-0254">Endocytosis</keyword>
<keyword id="KW-0333">Golgi apparatus</keyword>
<keyword id="KW-0472">Membrane</keyword>
<keyword id="KW-0653">Protein transport</keyword>
<keyword id="KW-1185">Reference proteome</keyword>
<keyword id="KW-0813">Transport</keyword>
<organism>
    <name type="scientific">Arabidopsis thaliana</name>
    <name type="common">Mouse-ear cress</name>
    <dbReference type="NCBI Taxonomy" id="3702"/>
    <lineage>
        <taxon>Eukaryota</taxon>
        <taxon>Viridiplantae</taxon>
        <taxon>Streptophyta</taxon>
        <taxon>Embryophyta</taxon>
        <taxon>Tracheophyta</taxon>
        <taxon>Spermatophyta</taxon>
        <taxon>Magnoliopsida</taxon>
        <taxon>eudicotyledons</taxon>
        <taxon>Gunneridae</taxon>
        <taxon>Pentapetalae</taxon>
        <taxon>rosids</taxon>
        <taxon>malvids</taxon>
        <taxon>Brassicales</taxon>
        <taxon>Brassicaceae</taxon>
        <taxon>Camelineae</taxon>
        <taxon>Arabidopsis</taxon>
    </lineage>
</organism>
<sequence length="653" mass="72172">MPSKLKKAIGAVKDQTSISLAKVANGATGGGDLTTLEVAILKATSHDEEVPIDDRLVTEILGIISSKKSHAASCAAAIGRRIGRTRNWIVALKSLVLVLRIFQDGDPYFPREVLHAMKRGAKILNLSSFRDDSNSCPWDFTAFVRTFALYLDERLDCFLTGKLQRRYTNREQTGRISTNSTTRSRFNPKAGIKSHEPAVRDMKPVMLLDKITYWQKLLDRAIATRPTGDAKANRLVKMSLYAVMQESFDLYRDISDGLALLLDSFFHLQYQSCINAFQACVRASKQFEELNAFYDLSKSIGIGRTSEYPSIQKISLELLETLQEFLKDQSSFPASSGLYPSPNSFLPPPPSSKDSAVSSSLDFGDSTIDTSERYSDYGSFRSTSLEDLMSRTEAGTSSPPMSCHSEPYGGGRDDPNGNNFDTVSTKSLPNNPSVSASNLILDLLSLDDVSNTAEAEDVEDKKKQDDSKAETFDPWEALMLRDDPKKKIETIEEEPSTAEDHQRDSGNWLLALEETATQVQGNNSMAIVPFGLDDPMPAFQAATDQYNPFLEEPVAQLATAGEPMITFGGLALTGFQPEPTFQVNVPDDFEPSSTPTFKATETLPMKCDPFTTFESFGFGETFSENGGVNQQSVLQEQQIWLQNQKKIIAKHLS</sequence>
<reference key="1">
    <citation type="journal article" date="2000" name="Nature">
        <title>Sequence and analysis of chromosome 1 of the plant Arabidopsis thaliana.</title>
        <authorList>
            <person name="Theologis A."/>
            <person name="Ecker J.R."/>
            <person name="Palm C.J."/>
            <person name="Federspiel N.A."/>
            <person name="Kaul S."/>
            <person name="White O."/>
            <person name="Alonso J."/>
            <person name="Altafi H."/>
            <person name="Araujo R."/>
            <person name="Bowman C.L."/>
            <person name="Brooks S.Y."/>
            <person name="Buehler E."/>
            <person name="Chan A."/>
            <person name="Chao Q."/>
            <person name="Chen H."/>
            <person name="Cheuk R.F."/>
            <person name="Chin C.W."/>
            <person name="Chung M.K."/>
            <person name="Conn L."/>
            <person name="Conway A.B."/>
            <person name="Conway A.R."/>
            <person name="Creasy T.H."/>
            <person name="Dewar K."/>
            <person name="Dunn P."/>
            <person name="Etgu P."/>
            <person name="Feldblyum T.V."/>
            <person name="Feng J.-D."/>
            <person name="Fong B."/>
            <person name="Fujii C.Y."/>
            <person name="Gill J.E."/>
            <person name="Goldsmith A.D."/>
            <person name="Haas B."/>
            <person name="Hansen N.F."/>
            <person name="Hughes B."/>
            <person name="Huizar L."/>
            <person name="Hunter J.L."/>
            <person name="Jenkins J."/>
            <person name="Johnson-Hopson C."/>
            <person name="Khan S."/>
            <person name="Khaykin E."/>
            <person name="Kim C.J."/>
            <person name="Koo H.L."/>
            <person name="Kremenetskaia I."/>
            <person name="Kurtz D.B."/>
            <person name="Kwan A."/>
            <person name="Lam B."/>
            <person name="Langin-Hooper S."/>
            <person name="Lee A."/>
            <person name="Lee J.M."/>
            <person name="Lenz C.A."/>
            <person name="Li J.H."/>
            <person name="Li Y.-P."/>
            <person name="Lin X."/>
            <person name="Liu S.X."/>
            <person name="Liu Z.A."/>
            <person name="Luros J.S."/>
            <person name="Maiti R."/>
            <person name="Marziali A."/>
            <person name="Militscher J."/>
            <person name="Miranda M."/>
            <person name="Nguyen M."/>
            <person name="Nierman W.C."/>
            <person name="Osborne B.I."/>
            <person name="Pai G."/>
            <person name="Peterson J."/>
            <person name="Pham P.K."/>
            <person name="Rizzo M."/>
            <person name="Rooney T."/>
            <person name="Rowley D."/>
            <person name="Sakano H."/>
            <person name="Salzberg S.L."/>
            <person name="Schwartz J.R."/>
            <person name="Shinn P."/>
            <person name="Southwick A.M."/>
            <person name="Sun H."/>
            <person name="Tallon L.J."/>
            <person name="Tambunga G."/>
            <person name="Toriumi M.J."/>
            <person name="Town C.D."/>
            <person name="Utterback T."/>
            <person name="Van Aken S."/>
            <person name="Vaysberg M."/>
            <person name="Vysotskaia V.S."/>
            <person name="Walker M."/>
            <person name="Wu D."/>
            <person name="Yu G."/>
            <person name="Fraser C.M."/>
            <person name="Venter J.C."/>
            <person name="Davis R.W."/>
        </authorList>
    </citation>
    <scope>NUCLEOTIDE SEQUENCE [LARGE SCALE GENOMIC DNA]</scope>
    <source>
        <strain>cv. Columbia</strain>
    </source>
</reference>
<reference key="2">
    <citation type="journal article" date="2017" name="Plant J.">
        <title>Araport11: a complete reannotation of the Arabidopsis thaliana reference genome.</title>
        <authorList>
            <person name="Cheng C.Y."/>
            <person name="Krishnakumar V."/>
            <person name="Chan A.P."/>
            <person name="Thibaud-Nissen F."/>
            <person name="Schobel S."/>
            <person name="Town C.D."/>
        </authorList>
    </citation>
    <scope>GENOME REANNOTATION</scope>
    <source>
        <strain>cv. Columbia</strain>
    </source>
</reference>
<reference key="3">
    <citation type="journal article" date="2002" name="Science">
        <title>Functional annotation of a full-length Arabidopsis cDNA collection.</title>
        <authorList>
            <person name="Seki M."/>
            <person name="Narusaka M."/>
            <person name="Kamiya A."/>
            <person name="Ishida J."/>
            <person name="Satou M."/>
            <person name="Sakurai T."/>
            <person name="Nakajima M."/>
            <person name="Enju A."/>
            <person name="Akiyama K."/>
            <person name="Oono Y."/>
            <person name="Muramatsu M."/>
            <person name="Hayashizaki Y."/>
            <person name="Kawai J."/>
            <person name="Carninci P."/>
            <person name="Itoh M."/>
            <person name="Ishii Y."/>
            <person name="Arakawa T."/>
            <person name="Shibata K."/>
            <person name="Shinagawa A."/>
            <person name="Shinozaki K."/>
        </authorList>
    </citation>
    <scope>NUCLEOTIDE SEQUENCE [LARGE SCALE MRNA]</scope>
    <source>
        <strain>cv. Columbia</strain>
    </source>
</reference>
<reference key="4">
    <citation type="journal article" date="2003" name="Science">
        <title>Empirical analysis of transcriptional activity in the Arabidopsis genome.</title>
        <authorList>
            <person name="Yamada K."/>
            <person name="Lim J."/>
            <person name="Dale J.M."/>
            <person name="Chen H."/>
            <person name="Shinn P."/>
            <person name="Palm C.J."/>
            <person name="Southwick A.M."/>
            <person name="Wu H.C."/>
            <person name="Kim C.J."/>
            <person name="Nguyen M."/>
            <person name="Pham P.K."/>
            <person name="Cheuk R.F."/>
            <person name="Karlin-Newmann G."/>
            <person name="Liu S.X."/>
            <person name="Lam B."/>
            <person name="Sakano H."/>
            <person name="Wu T."/>
            <person name="Yu G."/>
            <person name="Miranda M."/>
            <person name="Quach H.L."/>
            <person name="Tripp M."/>
            <person name="Chang C.H."/>
            <person name="Lee J.M."/>
            <person name="Toriumi M.J."/>
            <person name="Chan M.M."/>
            <person name="Tang C.C."/>
            <person name="Onodera C.S."/>
            <person name="Deng J.M."/>
            <person name="Akiyama K."/>
            <person name="Ansari Y."/>
            <person name="Arakawa T."/>
            <person name="Banh J."/>
            <person name="Banno F."/>
            <person name="Bowser L."/>
            <person name="Brooks S.Y."/>
            <person name="Carninci P."/>
            <person name="Chao Q."/>
            <person name="Choy N."/>
            <person name="Enju A."/>
            <person name="Goldsmith A.D."/>
            <person name="Gurjal M."/>
            <person name="Hansen N.F."/>
            <person name="Hayashizaki Y."/>
            <person name="Johnson-Hopson C."/>
            <person name="Hsuan V.W."/>
            <person name="Iida K."/>
            <person name="Karnes M."/>
            <person name="Khan S."/>
            <person name="Koesema E."/>
            <person name="Ishida J."/>
            <person name="Jiang P.X."/>
            <person name="Jones T."/>
            <person name="Kawai J."/>
            <person name="Kamiya A."/>
            <person name="Meyers C."/>
            <person name="Nakajima M."/>
            <person name="Narusaka M."/>
            <person name="Seki M."/>
            <person name="Sakurai T."/>
            <person name="Satou M."/>
            <person name="Tamse R."/>
            <person name="Vaysberg M."/>
            <person name="Wallender E.K."/>
            <person name="Wong C."/>
            <person name="Yamamura Y."/>
            <person name="Yuan S."/>
            <person name="Shinozaki K."/>
            <person name="Davis R.W."/>
            <person name="Theologis A."/>
            <person name="Ecker J.R."/>
        </authorList>
    </citation>
    <scope>NUCLEOTIDE SEQUENCE [LARGE SCALE MRNA]</scope>
    <source>
        <strain>cv. Columbia</strain>
    </source>
</reference>
<reference key="5">
    <citation type="journal article" date="2004" name="J. Cell Sci.">
        <title>Identification and functional characterization of Arabidopsis AP180, a binding partner of plant alphaC-adaptin.</title>
        <authorList>
            <person name="Barth M."/>
            <person name="Holstein S.E."/>
        </authorList>
    </citation>
    <scope>FUNCTION</scope>
    <scope>INTERACTION WITH ALPHAC-AD</scope>
    <scope>MUTAGENESIS OF 442-ASP--LEU-444; 473-ASP--TRP-475 AND 608-ASP--PHE-610</scope>
</reference>
<accession>Q9ZVN6</accession>
<gene>
    <name type="primary">AP180</name>
    <name type="ordered locus">At1g05020</name>
    <name type="ORF">T7A14.11</name>
</gene>
<dbReference type="EMBL" id="AC005322">
    <property type="protein sequence ID" value="AAC97997.1"/>
    <property type="molecule type" value="Genomic_DNA"/>
</dbReference>
<dbReference type="EMBL" id="CP002684">
    <property type="protein sequence ID" value="AEE27780.1"/>
    <property type="molecule type" value="Genomic_DNA"/>
</dbReference>
<dbReference type="EMBL" id="AK117462">
    <property type="protein sequence ID" value="BAC42127.1"/>
    <property type="molecule type" value="mRNA"/>
</dbReference>
<dbReference type="EMBL" id="BT005184">
    <property type="protein sequence ID" value="AAO50717.1"/>
    <property type="molecule type" value="mRNA"/>
</dbReference>
<dbReference type="PIR" id="B86184">
    <property type="entry name" value="B86184"/>
</dbReference>
<dbReference type="RefSeq" id="NP_563726.1">
    <property type="nucleotide sequence ID" value="NM_100381.3"/>
</dbReference>
<dbReference type="SMR" id="Q9ZVN6"/>
<dbReference type="BioGRID" id="24578">
    <property type="interactions" value="4"/>
</dbReference>
<dbReference type="FunCoup" id="Q9ZVN6">
    <property type="interactions" value="466"/>
</dbReference>
<dbReference type="IntAct" id="Q9ZVN6">
    <property type="interactions" value="4"/>
</dbReference>
<dbReference type="STRING" id="3702.Q9ZVN6"/>
<dbReference type="PaxDb" id="3702-AT1G05020.1"/>
<dbReference type="ProteomicsDB" id="244975"/>
<dbReference type="EnsemblPlants" id="AT1G05020.1">
    <property type="protein sequence ID" value="AT1G05020.1"/>
    <property type="gene ID" value="AT1G05020"/>
</dbReference>
<dbReference type="GeneID" id="839343"/>
<dbReference type="Gramene" id="AT1G05020.1">
    <property type="protein sequence ID" value="AT1G05020.1"/>
    <property type="gene ID" value="AT1G05020"/>
</dbReference>
<dbReference type="KEGG" id="ath:AT1G05020"/>
<dbReference type="Araport" id="AT1G05020"/>
<dbReference type="TAIR" id="AT1G05020">
    <property type="gene designation" value="AP180"/>
</dbReference>
<dbReference type="eggNOG" id="KOG0251">
    <property type="taxonomic scope" value="Eukaryota"/>
</dbReference>
<dbReference type="HOGENOM" id="CLU_014098_4_0_1"/>
<dbReference type="InParanoid" id="Q9ZVN6"/>
<dbReference type="OMA" id="CHSEPYG"/>
<dbReference type="OrthoDB" id="44015at2759"/>
<dbReference type="PhylomeDB" id="Q9ZVN6"/>
<dbReference type="PRO" id="PR:Q9ZVN6"/>
<dbReference type="Proteomes" id="UP000006548">
    <property type="component" value="Chromosome 1"/>
</dbReference>
<dbReference type="ExpressionAtlas" id="Q9ZVN6">
    <property type="expression patterns" value="baseline and differential"/>
</dbReference>
<dbReference type="GO" id="GO:0005905">
    <property type="term" value="C:clathrin-coated pit"/>
    <property type="evidence" value="ECO:0007669"/>
    <property type="project" value="UniProtKB-SubCell"/>
</dbReference>
<dbReference type="GO" id="GO:0030136">
    <property type="term" value="C:clathrin-coated vesicle"/>
    <property type="evidence" value="ECO:0007669"/>
    <property type="project" value="UniProtKB-SubCell"/>
</dbReference>
<dbReference type="GO" id="GO:0005794">
    <property type="term" value="C:Golgi apparatus"/>
    <property type="evidence" value="ECO:0007669"/>
    <property type="project" value="UniProtKB-SubCell"/>
</dbReference>
<dbReference type="GO" id="GO:0005545">
    <property type="term" value="F:1-phosphatidylinositol binding"/>
    <property type="evidence" value="ECO:0007669"/>
    <property type="project" value="InterPro"/>
</dbReference>
<dbReference type="GO" id="GO:0030276">
    <property type="term" value="F:clathrin binding"/>
    <property type="evidence" value="ECO:0007669"/>
    <property type="project" value="InterPro"/>
</dbReference>
<dbReference type="GO" id="GO:0048268">
    <property type="term" value="P:clathrin coat assembly"/>
    <property type="evidence" value="ECO:0007669"/>
    <property type="project" value="InterPro"/>
</dbReference>
<dbReference type="GO" id="GO:0072583">
    <property type="term" value="P:clathrin-dependent endocytosis"/>
    <property type="evidence" value="ECO:0007669"/>
    <property type="project" value="InterPro"/>
</dbReference>
<dbReference type="GO" id="GO:0015031">
    <property type="term" value="P:protein transport"/>
    <property type="evidence" value="ECO:0007669"/>
    <property type="project" value="UniProtKB-KW"/>
</dbReference>
<dbReference type="CDD" id="cd16987">
    <property type="entry name" value="ANTH_N_AP180_plant"/>
    <property type="match status" value="1"/>
</dbReference>
<dbReference type="FunFam" id="1.25.40.90:FF:000019">
    <property type="entry name" value="Clathrin coat assembly protein"/>
    <property type="match status" value="1"/>
</dbReference>
<dbReference type="FunFam" id="1.20.58.150:FF:000005">
    <property type="entry name" value="putative clathrin assembly protein At2g25430"/>
    <property type="match status" value="1"/>
</dbReference>
<dbReference type="Gene3D" id="1.25.40.90">
    <property type="match status" value="1"/>
</dbReference>
<dbReference type="Gene3D" id="1.20.58.150">
    <property type="entry name" value="ANTH domain"/>
    <property type="match status" value="1"/>
</dbReference>
<dbReference type="InterPro" id="IPR011417">
    <property type="entry name" value="ANTH_dom"/>
</dbReference>
<dbReference type="InterPro" id="IPR014712">
    <property type="entry name" value="ANTH_dom_sf"/>
</dbReference>
<dbReference type="InterPro" id="IPR048050">
    <property type="entry name" value="ANTH_N_plant"/>
</dbReference>
<dbReference type="InterPro" id="IPR045192">
    <property type="entry name" value="AP180-like"/>
</dbReference>
<dbReference type="InterPro" id="IPR013809">
    <property type="entry name" value="ENTH"/>
</dbReference>
<dbReference type="InterPro" id="IPR008942">
    <property type="entry name" value="ENTH_VHS"/>
</dbReference>
<dbReference type="PANTHER" id="PTHR22951">
    <property type="entry name" value="CLATHRIN ASSEMBLY PROTEIN"/>
    <property type="match status" value="1"/>
</dbReference>
<dbReference type="PANTHER" id="PTHR22951:SF75">
    <property type="entry name" value="CLATHRIN COAT ASSEMBLY PROTEIN AP180"/>
    <property type="match status" value="1"/>
</dbReference>
<dbReference type="Pfam" id="PF07651">
    <property type="entry name" value="ANTH"/>
    <property type="match status" value="1"/>
</dbReference>
<dbReference type="SMART" id="SM00273">
    <property type="entry name" value="ENTH"/>
    <property type="match status" value="1"/>
</dbReference>
<dbReference type="SUPFAM" id="SSF48464">
    <property type="entry name" value="ENTH/VHS domain"/>
    <property type="match status" value="1"/>
</dbReference>
<dbReference type="SUPFAM" id="SSF89009">
    <property type="entry name" value="GAT-like domain"/>
    <property type="match status" value="1"/>
</dbReference>
<dbReference type="PROSITE" id="PS50942">
    <property type="entry name" value="ENTH"/>
    <property type="match status" value="1"/>
</dbReference>
<evidence type="ECO:0000250" key="1"/>
<evidence type="ECO:0000255" key="2">
    <source>
        <dbReference type="PROSITE-ProRule" id="PRU00243"/>
    </source>
</evidence>
<evidence type="ECO:0000256" key="3">
    <source>
        <dbReference type="SAM" id="MobiDB-lite"/>
    </source>
</evidence>
<evidence type="ECO:0000269" key="4">
    <source>
    </source>
</evidence>
<proteinExistence type="evidence at protein level"/>
<comment type="function">
    <text evidence="4">Adaptins are components of the adapter complexes which link clathrin to receptors in coated vesicles. Clathrin-associated protein complexes are believed to interact with the cytoplasmic tails of membrane proteins, leading to their selection and concentration. Binding of AP180 to clathrin triskelia promotes their assembly into 70-90 nm coats cages.</text>
</comment>
<comment type="subunit">
    <text evidence="4">Interacts with ALPHAC-AD and clathrin.</text>
</comment>
<comment type="interaction">
    <interactant intactId="EBI-2366853">
        <id>Q9ZVN6</id>
    </interactant>
    <interactant intactId="EBI-2366827">
        <id>Q8LPK4</id>
        <label>ALPHAC-AD</label>
    </interactant>
    <organismsDiffer>false</organismsDiffer>
    <experiments>2</experiments>
</comment>
<comment type="subcellular location">
    <subcellularLocation>
        <location evidence="1">Membrane</location>
        <location evidence="1">Clathrin-coated pit</location>
    </subcellularLocation>
    <subcellularLocation>
        <location evidence="1">Golgi apparatus</location>
    </subcellularLocation>
    <subcellularLocation>
        <location evidence="1">Cytoplasmic vesicle</location>
        <location evidence="1">Clathrin-coated vesicle</location>
    </subcellularLocation>
    <text evidence="1">Colocalized with clathrin in the Golgi area.</text>
</comment>
<protein>
    <recommendedName>
        <fullName>Clathrin coat assembly protein AP180</fullName>
        <shortName>At-AP180</shortName>
    </recommendedName>
    <alternativeName>
        <fullName>Clathrin coat-associated protein AP180</fullName>
    </alternativeName>
</protein>